<evidence type="ECO:0000255" key="1">
    <source>
        <dbReference type="HAMAP-Rule" id="MF_00277"/>
    </source>
</evidence>
<evidence type="ECO:0000255" key="2">
    <source>
        <dbReference type="PROSITE-ProRule" id="PRU01175"/>
    </source>
</evidence>
<sequence length="858" mass="96750">MSASVAEPPPALSRKAEFKAAKAELLARFKSANHVTPLMHALSRATDDALRSLWQECGLPATLALVAVGGFGRGELSPHSDVDILVLLPDAHASELDERIERFIGMAWDLGLEIGSSVRTVDQCIEEASHDVTVQTSLLEARRIVGSTALFERFMLRYREALDARAFFQAKVLEMRQRHAKFQDTPYSLEPNVKESPGGLRDLQTILWIARAAGFGSSWRELDTRGLITDREARELRRNEGFLKTLRARLHVIAGRRQDILVFDLQTQAAESFGYQPTSAKRASEQLMRRYYWAAKAVTQLATILIQNIEAQLFPATSGVTRVLSPGRFVEKQGMLEIAADDVFERHPDAILEAFLLYEATRGVKGLSARTLRALYNSRDVMNNAWRRDPRNRHTFMQILQQPEGITHAFRLMNQTSVLGRYLLNFRRIVGQMQHDLYHVYTVDQHILMVLRNIRRFAVAEHAHEYPFCSQLIVNFERPWVLYVAALFHDIAKGRGGDHSALGMADARRFCREHGIEGDDAALVVWLVQHHLTMSQVAQKQDTSDPVVIKRFAELVGSERRLTALYLLTVADIRGTSPKVWNTWKGKLLEDLYRATLAVLGGAQPDAHSELKTRQEEALALLRLETVPPDAHRALWDQLDVGYFLRHDAADIAWQTRVLYRHVAADTAIVRARPSPVGDALQVLVYVKDRSDLFAGICAYFDRNGLSVLDARVNTTRHGYALDNFIVTQTEHDVQYRDIANLVEQQLAARLAESAPLPEPSKGRLSRLSRTFPITPRVDLRADERGQYYILSVSANDRPGLLYSIARVLAEHRVGVHAARINTLGERVEDVFMLDGTGLSDNRLQIQVETELLRAIAV</sequence>
<name>GLND_BURMS</name>
<protein>
    <recommendedName>
        <fullName evidence="1">Bifunctional uridylyltransferase/uridylyl-removing enzyme</fullName>
        <shortName evidence="1">UTase/UR</shortName>
    </recommendedName>
    <alternativeName>
        <fullName evidence="1">Bifunctional [protein-PII] modification enzyme</fullName>
    </alternativeName>
    <alternativeName>
        <fullName evidence="1">Bifunctional nitrogen sensor protein</fullName>
    </alternativeName>
    <domain>
        <recommendedName>
            <fullName evidence="1">[Protein-PII] uridylyltransferase</fullName>
            <shortName evidence="1">PII uridylyltransferase</shortName>
            <shortName evidence="1">UTase</shortName>
            <ecNumber evidence="1">2.7.7.59</ecNumber>
        </recommendedName>
    </domain>
    <domain>
        <recommendedName>
            <fullName evidence="1">[Protein-PII]-UMP uridylyl-removing enzyme</fullName>
            <shortName evidence="1">UR</shortName>
            <ecNumber evidence="1">3.1.4.-</ecNumber>
        </recommendedName>
    </domain>
</protein>
<keyword id="KW-0378">Hydrolase</keyword>
<keyword id="KW-0460">Magnesium</keyword>
<keyword id="KW-0511">Multifunctional enzyme</keyword>
<keyword id="KW-0548">Nucleotidyltransferase</keyword>
<keyword id="KW-0677">Repeat</keyword>
<keyword id="KW-0808">Transferase</keyword>
<proteinExistence type="inferred from homology"/>
<reference key="1">
    <citation type="journal article" date="2010" name="Genome Biol. Evol.">
        <title>Continuing evolution of Burkholderia mallei through genome reduction and large-scale rearrangements.</title>
        <authorList>
            <person name="Losada L."/>
            <person name="Ronning C.M."/>
            <person name="DeShazer D."/>
            <person name="Woods D."/>
            <person name="Fedorova N."/>
            <person name="Kim H.S."/>
            <person name="Shabalina S.A."/>
            <person name="Pearson T.R."/>
            <person name="Brinkac L."/>
            <person name="Tan P."/>
            <person name="Nandi T."/>
            <person name="Crabtree J."/>
            <person name="Badger J."/>
            <person name="Beckstrom-Sternberg S."/>
            <person name="Saqib M."/>
            <person name="Schutzer S.E."/>
            <person name="Keim P."/>
            <person name="Nierman W.C."/>
        </authorList>
    </citation>
    <scope>NUCLEOTIDE SEQUENCE [LARGE SCALE GENOMIC DNA]</scope>
    <source>
        <strain>SAVP1</strain>
    </source>
</reference>
<comment type="function">
    <text evidence="1">Modifies, by uridylylation and deuridylylation, the PII regulatory proteins (GlnB and homologs), in response to the nitrogen status of the cell that GlnD senses through the glutamine level. Under low glutamine levels, catalyzes the conversion of the PII proteins and UTP to PII-UMP and PPi, while under higher glutamine levels, GlnD hydrolyzes PII-UMP to PII and UMP (deuridylylation). Thus, controls uridylylation state and activity of the PII proteins, and plays an important role in the regulation of nitrogen assimilation and metabolism.</text>
</comment>
<comment type="catalytic activity">
    <reaction evidence="1">
        <text>[protein-PII]-L-tyrosine + UTP = [protein-PII]-uridylyl-L-tyrosine + diphosphate</text>
        <dbReference type="Rhea" id="RHEA:13673"/>
        <dbReference type="Rhea" id="RHEA-COMP:12147"/>
        <dbReference type="Rhea" id="RHEA-COMP:12148"/>
        <dbReference type="ChEBI" id="CHEBI:33019"/>
        <dbReference type="ChEBI" id="CHEBI:46398"/>
        <dbReference type="ChEBI" id="CHEBI:46858"/>
        <dbReference type="ChEBI" id="CHEBI:90602"/>
        <dbReference type="EC" id="2.7.7.59"/>
    </reaction>
</comment>
<comment type="catalytic activity">
    <reaction evidence="1">
        <text>[protein-PII]-uridylyl-L-tyrosine + H2O = [protein-PII]-L-tyrosine + UMP + H(+)</text>
        <dbReference type="Rhea" id="RHEA:48600"/>
        <dbReference type="Rhea" id="RHEA-COMP:12147"/>
        <dbReference type="Rhea" id="RHEA-COMP:12148"/>
        <dbReference type="ChEBI" id="CHEBI:15377"/>
        <dbReference type="ChEBI" id="CHEBI:15378"/>
        <dbReference type="ChEBI" id="CHEBI:46858"/>
        <dbReference type="ChEBI" id="CHEBI:57865"/>
        <dbReference type="ChEBI" id="CHEBI:90602"/>
    </reaction>
</comment>
<comment type="cofactor">
    <cofactor evidence="1">
        <name>Mg(2+)</name>
        <dbReference type="ChEBI" id="CHEBI:18420"/>
    </cofactor>
</comment>
<comment type="activity regulation">
    <text evidence="1">Uridylyltransferase (UTase) activity is inhibited by glutamine, while glutamine activates uridylyl-removing (UR) activity.</text>
</comment>
<comment type="domain">
    <text evidence="1">Has four distinct domains: an N-terminal nucleotidyltransferase (NT) domain responsible for UTase activity, a central HD domain that encodes UR activity, and two C-terminal ACT domains that seem to have a role in glutamine sensing.</text>
</comment>
<comment type="similarity">
    <text evidence="1">Belongs to the GlnD family.</text>
</comment>
<feature type="chain" id="PRO_1000022333" description="Bifunctional uridylyltransferase/uridylyl-removing enzyme">
    <location>
        <begin position="1"/>
        <end position="858"/>
    </location>
</feature>
<feature type="domain" description="HD" evidence="2">
    <location>
        <begin position="443"/>
        <end position="565"/>
    </location>
</feature>
<feature type="domain" description="ACT 1" evidence="1">
    <location>
        <begin position="682"/>
        <end position="761"/>
    </location>
</feature>
<feature type="domain" description="ACT 2" evidence="1">
    <location>
        <begin position="790"/>
        <end position="858"/>
    </location>
</feature>
<feature type="region of interest" description="Uridylyltransferase">
    <location>
        <begin position="1"/>
        <end position="324"/>
    </location>
</feature>
<feature type="region of interest" description="Uridylyl-removing">
    <location>
        <begin position="325"/>
        <end position="681"/>
    </location>
</feature>
<accession>A1V572</accession>
<gene>
    <name evidence="1" type="primary">glnD</name>
    <name type="ordered locus">BMASAVP1_A2059</name>
</gene>
<organism>
    <name type="scientific">Burkholderia mallei (strain SAVP1)</name>
    <dbReference type="NCBI Taxonomy" id="320388"/>
    <lineage>
        <taxon>Bacteria</taxon>
        <taxon>Pseudomonadati</taxon>
        <taxon>Pseudomonadota</taxon>
        <taxon>Betaproteobacteria</taxon>
        <taxon>Burkholderiales</taxon>
        <taxon>Burkholderiaceae</taxon>
        <taxon>Burkholderia</taxon>
        <taxon>pseudomallei group</taxon>
    </lineage>
</organism>
<dbReference type="EC" id="2.7.7.59" evidence="1"/>
<dbReference type="EC" id="3.1.4.-" evidence="1"/>
<dbReference type="EMBL" id="CP000526">
    <property type="protein sequence ID" value="ABM52115.1"/>
    <property type="molecule type" value="Genomic_DNA"/>
</dbReference>
<dbReference type="RefSeq" id="WP_004193976.1">
    <property type="nucleotide sequence ID" value="NC_008785.1"/>
</dbReference>
<dbReference type="SMR" id="A1V572"/>
<dbReference type="KEGG" id="bmv:BMASAVP1_A2059"/>
<dbReference type="HOGENOM" id="CLU_012833_0_0_4"/>
<dbReference type="GO" id="GO:0008773">
    <property type="term" value="F:[protein-PII] uridylyltransferase activity"/>
    <property type="evidence" value="ECO:0007669"/>
    <property type="project" value="UniProtKB-UniRule"/>
</dbReference>
<dbReference type="GO" id="GO:0008081">
    <property type="term" value="F:phosphoric diester hydrolase activity"/>
    <property type="evidence" value="ECO:0007669"/>
    <property type="project" value="UniProtKB-UniRule"/>
</dbReference>
<dbReference type="GO" id="GO:0006808">
    <property type="term" value="P:regulation of nitrogen utilization"/>
    <property type="evidence" value="ECO:0007669"/>
    <property type="project" value="UniProtKB-UniRule"/>
</dbReference>
<dbReference type="CDD" id="cd04899">
    <property type="entry name" value="ACT_ACR-UUR-like_2"/>
    <property type="match status" value="1"/>
</dbReference>
<dbReference type="CDD" id="cd04900">
    <property type="entry name" value="ACT_UUR-like_1"/>
    <property type="match status" value="1"/>
</dbReference>
<dbReference type="CDD" id="cd00077">
    <property type="entry name" value="HDc"/>
    <property type="match status" value="1"/>
</dbReference>
<dbReference type="CDD" id="cd05401">
    <property type="entry name" value="NT_GlnE_GlnD_like"/>
    <property type="match status" value="1"/>
</dbReference>
<dbReference type="Gene3D" id="3.30.70.260">
    <property type="match status" value="1"/>
</dbReference>
<dbReference type="Gene3D" id="3.30.460.10">
    <property type="entry name" value="Beta Polymerase, domain 2"/>
    <property type="match status" value="1"/>
</dbReference>
<dbReference type="Gene3D" id="1.10.3210.10">
    <property type="entry name" value="Hypothetical protein af1432"/>
    <property type="match status" value="1"/>
</dbReference>
<dbReference type="Gene3D" id="1.20.120.330">
    <property type="entry name" value="Nucleotidyltransferases domain 2"/>
    <property type="match status" value="1"/>
</dbReference>
<dbReference type="HAMAP" id="MF_00277">
    <property type="entry name" value="PII_uridylyl_transf"/>
    <property type="match status" value="1"/>
</dbReference>
<dbReference type="InterPro" id="IPR045865">
    <property type="entry name" value="ACT-like_dom_sf"/>
</dbReference>
<dbReference type="InterPro" id="IPR002912">
    <property type="entry name" value="ACT_dom"/>
</dbReference>
<dbReference type="InterPro" id="IPR003607">
    <property type="entry name" value="HD/PDEase_dom"/>
</dbReference>
<dbReference type="InterPro" id="IPR006674">
    <property type="entry name" value="HD_domain"/>
</dbReference>
<dbReference type="InterPro" id="IPR043519">
    <property type="entry name" value="NT_sf"/>
</dbReference>
<dbReference type="InterPro" id="IPR013546">
    <property type="entry name" value="PII_UdlTrfase/GS_AdlTrfase"/>
</dbReference>
<dbReference type="InterPro" id="IPR002934">
    <property type="entry name" value="Polymerase_NTP_transf_dom"/>
</dbReference>
<dbReference type="InterPro" id="IPR010043">
    <property type="entry name" value="UTase/UR"/>
</dbReference>
<dbReference type="NCBIfam" id="NF002837">
    <property type="entry name" value="PRK03059.1"/>
    <property type="match status" value="1"/>
</dbReference>
<dbReference type="NCBIfam" id="TIGR01693">
    <property type="entry name" value="UTase_glnD"/>
    <property type="match status" value="1"/>
</dbReference>
<dbReference type="PANTHER" id="PTHR47320">
    <property type="entry name" value="BIFUNCTIONAL URIDYLYLTRANSFERASE/URIDYLYL-REMOVING ENZYME"/>
    <property type="match status" value="1"/>
</dbReference>
<dbReference type="PANTHER" id="PTHR47320:SF1">
    <property type="entry name" value="BIFUNCTIONAL URIDYLYLTRANSFERASE_URIDYLYL-REMOVING ENZYME"/>
    <property type="match status" value="1"/>
</dbReference>
<dbReference type="Pfam" id="PF08335">
    <property type="entry name" value="GlnD_UR_UTase"/>
    <property type="match status" value="1"/>
</dbReference>
<dbReference type="Pfam" id="PF01966">
    <property type="entry name" value="HD"/>
    <property type="match status" value="1"/>
</dbReference>
<dbReference type="Pfam" id="PF01909">
    <property type="entry name" value="NTP_transf_2"/>
    <property type="match status" value="1"/>
</dbReference>
<dbReference type="PIRSF" id="PIRSF006288">
    <property type="entry name" value="PII_uridyltransf"/>
    <property type="match status" value="1"/>
</dbReference>
<dbReference type="SMART" id="SM00471">
    <property type="entry name" value="HDc"/>
    <property type="match status" value="1"/>
</dbReference>
<dbReference type="SUPFAM" id="SSF55021">
    <property type="entry name" value="ACT-like"/>
    <property type="match status" value="2"/>
</dbReference>
<dbReference type="SUPFAM" id="SSF109604">
    <property type="entry name" value="HD-domain/PDEase-like"/>
    <property type="match status" value="1"/>
</dbReference>
<dbReference type="SUPFAM" id="SSF81301">
    <property type="entry name" value="Nucleotidyltransferase"/>
    <property type="match status" value="1"/>
</dbReference>
<dbReference type="SUPFAM" id="SSF81593">
    <property type="entry name" value="Nucleotidyltransferase substrate binding subunit/domain"/>
    <property type="match status" value="1"/>
</dbReference>
<dbReference type="PROSITE" id="PS51671">
    <property type="entry name" value="ACT"/>
    <property type="match status" value="2"/>
</dbReference>
<dbReference type="PROSITE" id="PS51831">
    <property type="entry name" value="HD"/>
    <property type="match status" value="1"/>
</dbReference>